<keyword id="KW-0002">3D-structure</keyword>
<keyword id="KW-0025">Alternative splicing</keyword>
<keyword id="KW-0067">ATP-binding</keyword>
<keyword id="KW-0966">Cell projection</keyword>
<keyword id="KW-0969">Cilium</keyword>
<keyword id="KW-0963">Cytoplasm</keyword>
<keyword id="KW-0206">Cytoskeleton</keyword>
<keyword id="KW-0436">Ligase</keyword>
<keyword id="KW-0460">Magnesium</keyword>
<keyword id="KW-0479">Metal-binding</keyword>
<keyword id="KW-0493">Microtubule</keyword>
<keyword id="KW-0547">Nucleotide-binding</keyword>
<keyword id="KW-1185">Reference proteome</keyword>
<evidence type="ECO:0000250" key="1">
    <source>
        <dbReference type="UniProtKB" id="Q6ZT98"/>
    </source>
</evidence>
<evidence type="ECO:0000250" key="2">
    <source>
        <dbReference type="UniProtKB" id="Q8N841"/>
    </source>
</evidence>
<evidence type="ECO:0000255" key="3"/>
<evidence type="ECO:0000255" key="4">
    <source>
        <dbReference type="PROSITE-ProRule" id="PRU00568"/>
    </source>
</evidence>
<evidence type="ECO:0000256" key="5">
    <source>
        <dbReference type="SAM" id="MobiDB-lite"/>
    </source>
</evidence>
<evidence type="ECO:0000269" key="6">
    <source>
    </source>
</evidence>
<evidence type="ECO:0000269" key="7">
    <source>
    </source>
</evidence>
<evidence type="ECO:0000269" key="8">
    <source>
    </source>
</evidence>
<evidence type="ECO:0000269" key="9">
    <source>
    </source>
</evidence>
<evidence type="ECO:0000269" key="10">
    <source>
    </source>
</evidence>
<evidence type="ECO:0000269" key="11">
    <source>
    </source>
</evidence>
<evidence type="ECO:0000269" key="12">
    <source>
    </source>
</evidence>
<evidence type="ECO:0000269" key="13">
    <source>
    </source>
</evidence>
<evidence type="ECO:0000269" key="14">
    <source>
    </source>
</evidence>
<evidence type="ECO:0000303" key="15">
    <source>
    </source>
</evidence>
<evidence type="ECO:0000303" key="16">
    <source>
    </source>
</evidence>
<evidence type="ECO:0000303" key="17">
    <source>
    </source>
</evidence>
<evidence type="ECO:0000305" key="18"/>
<evidence type="ECO:0000305" key="19">
    <source>
    </source>
</evidence>
<evidence type="ECO:0000305" key="20">
    <source>
    </source>
</evidence>
<evidence type="ECO:0000305" key="21">
    <source>
    </source>
</evidence>
<evidence type="ECO:0000305" key="22">
    <source>
    </source>
</evidence>
<evidence type="ECO:0000305" key="23">
    <source>
    </source>
</evidence>
<evidence type="ECO:0000312" key="24">
    <source>
        <dbReference type="EMBL" id="AAI32204.1"/>
    </source>
</evidence>
<evidence type="ECO:0000312" key="25">
    <source>
        <dbReference type="EMBL" id="BAC36577.1"/>
    </source>
</evidence>
<evidence type="ECO:0000312" key="26">
    <source>
        <dbReference type="EMBL" id="BAE26641.1"/>
    </source>
</evidence>
<evidence type="ECO:0000312" key="27">
    <source>
        <dbReference type="EMBL" id="CAM84326.1"/>
    </source>
</evidence>
<evidence type="ECO:0007744" key="28">
    <source>
        <dbReference type="PDB" id="6VZQ"/>
    </source>
</evidence>
<evidence type="ECO:0007744" key="29">
    <source>
        <dbReference type="PDB" id="6VZR"/>
    </source>
</evidence>
<evidence type="ECO:0007744" key="30">
    <source>
        <dbReference type="PDB" id="6VZS"/>
    </source>
</evidence>
<evidence type="ECO:0007744" key="31">
    <source>
        <dbReference type="PDB" id="6VZT"/>
    </source>
</evidence>
<evidence type="ECO:0007744" key="32">
    <source>
        <dbReference type="PDB" id="6VZU"/>
    </source>
</evidence>
<evidence type="ECO:0007744" key="33">
    <source>
        <dbReference type="PDB" id="6VZV"/>
    </source>
</evidence>
<evidence type="ECO:0007744" key="34">
    <source>
        <dbReference type="PDB" id="6VZW"/>
    </source>
</evidence>
<evidence type="ECO:0007829" key="35">
    <source>
        <dbReference type="PDB" id="6VZT"/>
    </source>
</evidence>
<evidence type="ECO:0007829" key="36">
    <source>
        <dbReference type="PDB" id="6VZU"/>
    </source>
</evidence>
<dbReference type="EC" id="6.3.2.-" evidence="8 9 10 13 14"/>
<dbReference type="EMBL" id="AM690749">
    <property type="protein sequence ID" value="CAM84326.1"/>
    <property type="molecule type" value="mRNA"/>
</dbReference>
<dbReference type="EMBL" id="AK077033">
    <property type="protein sequence ID" value="BAC36577.1"/>
    <property type="status" value="ALT_FRAME"/>
    <property type="molecule type" value="mRNA"/>
</dbReference>
<dbReference type="EMBL" id="AK145771">
    <property type="protein sequence ID" value="BAE26641.1"/>
    <property type="molecule type" value="mRNA"/>
</dbReference>
<dbReference type="EMBL" id="AL603682">
    <property type="protein sequence ID" value="CAM18273.1"/>
    <property type="molecule type" value="Genomic_DNA"/>
</dbReference>
<dbReference type="EMBL" id="AL603682">
    <property type="protein sequence ID" value="CAM18274.1"/>
    <property type="status" value="ALT_SEQ"/>
    <property type="molecule type" value="Genomic_DNA"/>
</dbReference>
<dbReference type="EMBL" id="BC132203">
    <property type="protein sequence ID" value="AAI32204.1"/>
    <property type="molecule type" value="mRNA"/>
</dbReference>
<dbReference type="EMBL" id="BC138058">
    <property type="protein sequence ID" value="AAI38059.1"/>
    <property type="molecule type" value="mRNA"/>
</dbReference>
<dbReference type="EMBL" id="BC145131">
    <property type="protein sequence ID" value="AAI45132.1"/>
    <property type="molecule type" value="mRNA"/>
</dbReference>
<dbReference type="CCDS" id="CCDS25290.2">
    <molecule id="A4Q9E8-1"/>
</dbReference>
<dbReference type="RefSeq" id="NP_766387.2">
    <molecule id="A4Q9E8-1"/>
    <property type="nucleotide sequence ID" value="NM_172799.5"/>
</dbReference>
<dbReference type="RefSeq" id="XP_017170019.1">
    <property type="nucleotide sequence ID" value="XM_017314530.1"/>
</dbReference>
<dbReference type="RefSeq" id="XP_017170020.1">
    <molecule id="A4Q9E8-2"/>
    <property type="nucleotide sequence ID" value="XM_017314531.2"/>
</dbReference>
<dbReference type="PDB" id="6VZQ">
    <property type="method" value="X-ray"/>
    <property type="resolution" value="3.08 A"/>
    <property type="chains" value="A/B/C/D=51-503"/>
</dbReference>
<dbReference type="PDB" id="6VZR">
    <property type="method" value="X-ray"/>
    <property type="resolution" value="2.60 A"/>
    <property type="chains" value="A/B/C/D=51-503"/>
</dbReference>
<dbReference type="PDB" id="6VZS">
    <property type="method" value="X-ray"/>
    <property type="resolution" value="2.66 A"/>
    <property type="chains" value="A/B/C/D=51-503"/>
</dbReference>
<dbReference type="PDB" id="6VZT">
    <property type="method" value="X-ray"/>
    <property type="resolution" value="2.18 A"/>
    <property type="chains" value="A/B=51-503"/>
</dbReference>
<dbReference type="PDB" id="6VZU">
    <property type="method" value="X-ray"/>
    <property type="resolution" value="1.98 A"/>
    <property type="chains" value="A/B/C/D=51-503"/>
</dbReference>
<dbReference type="PDB" id="6VZV">
    <property type="method" value="X-ray"/>
    <property type="resolution" value="2.33 A"/>
    <property type="chains" value="A/B/C/D=51-503"/>
</dbReference>
<dbReference type="PDB" id="6VZW">
    <property type="method" value="X-ray"/>
    <property type="resolution" value="2.50 A"/>
    <property type="chains" value="A/B/C/D=51-503"/>
</dbReference>
<dbReference type="PDB" id="8T42">
    <property type="method" value="EM"/>
    <property type="resolution" value="3.60 A"/>
    <property type="chains" value="N=1-503"/>
</dbReference>
<dbReference type="PDB" id="8U3Z">
    <property type="method" value="EM"/>
    <property type="resolution" value="3.60 A"/>
    <property type="chains" value="N=1-822"/>
</dbReference>
<dbReference type="PDBsum" id="6VZQ"/>
<dbReference type="PDBsum" id="6VZR"/>
<dbReference type="PDBsum" id="6VZS"/>
<dbReference type="PDBsum" id="6VZT"/>
<dbReference type="PDBsum" id="6VZU"/>
<dbReference type="PDBsum" id="6VZV"/>
<dbReference type="PDBsum" id="6VZW"/>
<dbReference type="PDBsum" id="8T42"/>
<dbReference type="PDBsum" id="8U3Z"/>
<dbReference type="EMDB" id="EMD-41018"/>
<dbReference type="EMDB" id="EMD-41022"/>
<dbReference type="EMDB" id="EMD-42884"/>
<dbReference type="SMR" id="A4Q9E8"/>
<dbReference type="FunCoup" id="A4Q9E8">
    <property type="interactions" value="88"/>
</dbReference>
<dbReference type="STRING" id="10090.ENSMUSP00000127778"/>
<dbReference type="iPTMnet" id="A4Q9E8"/>
<dbReference type="PhosphoSitePlus" id="A4Q9E8"/>
<dbReference type="PaxDb" id="10090-ENSMUSP00000127778"/>
<dbReference type="ProteomicsDB" id="298018">
    <molecule id="A4Q9E8-1"/>
</dbReference>
<dbReference type="ProteomicsDB" id="298019">
    <molecule id="A4Q9E8-2"/>
</dbReference>
<dbReference type="Antibodypedia" id="17865">
    <property type="antibodies" value="41 antibodies from 12 providers"/>
</dbReference>
<dbReference type="DNASU" id="237930"/>
<dbReference type="Ensembl" id="ENSMUST00000107680.2">
    <molecule id="A4Q9E8-2"/>
    <property type="protein sequence ID" value="ENSMUSP00000103307.2"/>
    <property type="gene ID" value="ENSMUSG00000038756.14"/>
</dbReference>
<dbReference type="Ensembl" id="ENSMUST00000167258.8">
    <molecule id="A4Q9E8-1"/>
    <property type="protein sequence ID" value="ENSMUSP00000127778.2"/>
    <property type="gene ID" value="ENSMUSG00000038756.14"/>
</dbReference>
<dbReference type="GeneID" id="237930"/>
<dbReference type="KEGG" id="mmu:237930"/>
<dbReference type="UCSC" id="uc011ydd.1">
    <molecule id="A4Q9E8-1"/>
    <property type="organism name" value="mouse"/>
</dbReference>
<dbReference type="AGR" id="MGI:2683461"/>
<dbReference type="CTD" id="284076"/>
<dbReference type="MGI" id="MGI:2683461">
    <property type="gene designation" value="Ttll6"/>
</dbReference>
<dbReference type="VEuPathDB" id="HostDB:ENSMUSG00000038756"/>
<dbReference type="eggNOG" id="KOG2158">
    <property type="taxonomic scope" value="Eukaryota"/>
</dbReference>
<dbReference type="GeneTree" id="ENSGT00940000161434"/>
<dbReference type="HOGENOM" id="CLU_010131_7_2_1"/>
<dbReference type="InParanoid" id="A4Q9E8"/>
<dbReference type="OMA" id="LFPAHYN"/>
<dbReference type="OrthoDB" id="202825at2759"/>
<dbReference type="PhylomeDB" id="A4Q9E8"/>
<dbReference type="TreeFam" id="TF313087"/>
<dbReference type="BRENDA" id="6.3.2.B3">
    <property type="organism ID" value="3474"/>
</dbReference>
<dbReference type="Reactome" id="R-MMU-8955332">
    <property type="pathway name" value="Carboxyterminal post-translational modifications of tubulin"/>
</dbReference>
<dbReference type="BioGRID-ORCS" id="237930">
    <property type="hits" value="2 hits in 75 CRISPR screens"/>
</dbReference>
<dbReference type="PRO" id="PR:A4Q9E8"/>
<dbReference type="Proteomes" id="UP000000589">
    <property type="component" value="Chromosome 11"/>
</dbReference>
<dbReference type="RNAct" id="A4Q9E8">
    <property type="molecule type" value="protein"/>
</dbReference>
<dbReference type="Bgee" id="ENSMUSG00000038756">
    <property type="expression patterns" value="Expressed in spermatid and 29 other cell types or tissues"/>
</dbReference>
<dbReference type="GO" id="GO:0097731">
    <property type="term" value="C:9+0 non-motile cilium"/>
    <property type="evidence" value="ECO:0000314"/>
    <property type="project" value="MGI"/>
</dbReference>
<dbReference type="GO" id="GO:0036064">
    <property type="term" value="C:ciliary basal body"/>
    <property type="evidence" value="ECO:0000314"/>
    <property type="project" value="MGI"/>
</dbReference>
<dbReference type="GO" id="GO:0005737">
    <property type="term" value="C:cytoplasm"/>
    <property type="evidence" value="ECO:0007669"/>
    <property type="project" value="UniProtKB-SubCell"/>
</dbReference>
<dbReference type="GO" id="GO:0005874">
    <property type="term" value="C:microtubule"/>
    <property type="evidence" value="ECO:0007669"/>
    <property type="project" value="UniProtKB-KW"/>
</dbReference>
<dbReference type="GO" id="GO:0005524">
    <property type="term" value="F:ATP binding"/>
    <property type="evidence" value="ECO:0007669"/>
    <property type="project" value="UniProtKB-KW"/>
</dbReference>
<dbReference type="GO" id="GO:0046872">
    <property type="term" value="F:metal ion binding"/>
    <property type="evidence" value="ECO:0007669"/>
    <property type="project" value="UniProtKB-KW"/>
</dbReference>
<dbReference type="GO" id="GO:0070739">
    <property type="term" value="F:protein-glutamic acid ligase activity"/>
    <property type="evidence" value="ECO:0000314"/>
    <property type="project" value="UniProtKB"/>
</dbReference>
<dbReference type="GO" id="GO:0106438">
    <property type="term" value="F:protein-glutamic acid ligase activity, elongating"/>
    <property type="evidence" value="ECO:0007669"/>
    <property type="project" value="RHEA"/>
</dbReference>
<dbReference type="GO" id="GO:0106437">
    <property type="term" value="F:protein-glutamic acid ligase activity, initiating"/>
    <property type="evidence" value="ECO:0007669"/>
    <property type="project" value="RHEA"/>
</dbReference>
<dbReference type="GO" id="GO:0015631">
    <property type="term" value="F:tubulin binding"/>
    <property type="evidence" value="ECO:0000314"/>
    <property type="project" value="UniProtKB"/>
</dbReference>
<dbReference type="GO" id="GO:0070740">
    <property type="term" value="F:tubulin-glutamic acid ligase activity"/>
    <property type="evidence" value="ECO:0000314"/>
    <property type="project" value="UniProtKB"/>
</dbReference>
<dbReference type="GO" id="GO:0001578">
    <property type="term" value="P:microtubule bundle formation"/>
    <property type="evidence" value="ECO:0000316"/>
    <property type="project" value="MGI"/>
</dbReference>
<dbReference type="GO" id="GO:0051013">
    <property type="term" value="P:microtubule severing"/>
    <property type="evidence" value="ECO:0000314"/>
    <property type="project" value="MGI"/>
</dbReference>
<dbReference type="GO" id="GO:0003353">
    <property type="term" value="P:positive regulation of cilium movement"/>
    <property type="evidence" value="ECO:0000315"/>
    <property type="project" value="MGI"/>
</dbReference>
<dbReference type="GO" id="GO:0018095">
    <property type="term" value="P:protein polyglutamylation"/>
    <property type="evidence" value="ECO:0000314"/>
    <property type="project" value="UniProtKB"/>
</dbReference>
<dbReference type="GO" id="GO:0060296">
    <property type="term" value="P:regulation of cilium beat frequency involved in ciliary motility"/>
    <property type="evidence" value="ECO:0000314"/>
    <property type="project" value="UniProtKB"/>
</dbReference>
<dbReference type="FunFam" id="3.30.470.20:FF:000009">
    <property type="entry name" value="tubulin polyglutamylase TTLL5 isoform X1"/>
    <property type="match status" value="1"/>
</dbReference>
<dbReference type="Gene3D" id="3.30.470.20">
    <property type="entry name" value="ATP-grasp fold, B domain"/>
    <property type="match status" value="1"/>
</dbReference>
<dbReference type="InterPro" id="IPR004344">
    <property type="entry name" value="TTL/TTLL_fam"/>
</dbReference>
<dbReference type="PANTHER" id="PTHR12241">
    <property type="entry name" value="TUBULIN POLYGLUTAMYLASE"/>
    <property type="match status" value="1"/>
</dbReference>
<dbReference type="PANTHER" id="PTHR12241:SF96">
    <property type="entry name" value="TUBULIN POLYGLUTAMYLASE TTLL6"/>
    <property type="match status" value="1"/>
</dbReference>
<dbReference type="Pfam" id="PF03133">
    <property type="entry name" value="TTL"/>
    <property type="match status" value="1"/>
</dbReference>
<dbReference type="SUPFAM" id="SSF56059">
    <property type="entry name" value="Glutathione synthetase ATP-binding domain-like"/>
    <property type="match status" value="1"/>
</dbReference>
<dbReference type="PROSITE" id="PS51221">
    <property type="entry name" value="TTL"/>
    <property type="match status" value="1"/>
</dbReference>
<accession>A4Q9E8</accession>
<accession>A2A6M6</accession>
<accession>B2RQS4</accession>
<accession>Q3UL10</accession>
<accession>Q8BVQ1</accession>
<feature type="chain" id="PRO_0000326161" description="Tubulin polyglutamylase TTLL6">
    <location>
        <begin position="1"/>
        <end position="822"/>
    </location>
</feature>
<feature type="domain" description="TTL" evidence="4">
    <location>
        <begin position="57"/>
        <end position="400"/>
    </location>
</feature>
<feature type="region of interest" description="Disordered" evidence="5">
    <location>
        <begin position="1"/>
        <end position="24"/>
    </location>
</feature>
<feature type="region of interest" description="c-MTBD region" evidence="2">
    <location>
        <begin position="371"/>
        <end position="450"/>
    </location>
</feature>
<feature type="region of interest" description="Disordered" evidence="5">
    <location>
        <begin position="736"/>
        <end position="772"/>
    </location>
</feature>
<feature type="region of interest" description="Disordered" evidence="5">
    <location>
        <begin position="791"/>
        <end position="822"/>
    </location>
</feature>
<feature type="compositionally biased region" description="Acidic residues" evidence="5">
    <location>
        <begin position="8"/>
        <end position="24"/>
    </location>
</feature>
<feature type="compositionally biased region" description="Polar residues" evidence="5">
    <location>
        <begin position="802"/>
        <end position="814"/>
    </location>
</feature>
<feature type="binding site" evidence="14 31">
    <location>
        <position position="174"/>
    </location>
    <ligand>
        <name>ATP</name>
        <dbReference type="ChEBI" id="CHEBI:30616"/>
    </ligand>
</feature>
<feature type="binding site" evidence="14 31">
    <location>
        <begin position="180"/>
        <end position="181"/>
    </location>
    <ligand>
        <name>ATP</name>
        <dbReference type="ChEBI" id="CHEBI:30616"/>
    </ligand>
</feature>
<feature type="binding site" evidence="23">
    <location>
        <position position="180"/>
    </location>
    <ligand>
        <name>a protein</name>
        <dbReference type="ChEBI" id="CHEBI:16541"/>
    </ligand>
    <ligandPart>
        <name>L-glutamate residue</name>
        <dbReference type="ChEBI" id="CHEBI:29973"/>
        <note>L-glutamate acceptor residue in protein target</note>
    </ligandPart>
</feature>
<feature type="binding site" evidence="14 31">
    <location>
        <begin position="202"/>
        <end position="205"/>
    </location>
    <ligand>
        <name>ATP</name>
        <dbReference type="ChEBI" id="CHEBI:30616"/>
    </ligand>
</feature>
<feature type="binding site" evidence="14 31">
    <location>
        <begin position="215"/>
        <end position="217"/>
    </location>
    <ligand>
        <name>ATP</name>
        <dbReference type="ChEBI" id="CHEBI:30616"/>
    </ligand>
</feature>
<feature type="binding site" evidence="23 32 34">
    <location>
        <position position="241"/>
    </location>
    <ligand>
        <name>L-glutamate</name>
        <dbReference type="ChEBI" id="CHEBI:29985"/>
    </ligand>
</feature>
<feature type="binding site" evidence="14 31">
    <location>
        <begin position="263"/>
        <end position="264"/>
    </location>
    <ligand>
        <name>ATP</name>
        <dbReference type="ChEBI" id="CHEBI:30616"/>
    </ligand>
</feature>
<feature type="binding site" evidence="23 32 34">
    <location>
        <position position="265"/>
    </location>
    <ligand>
        <name>L-glutamate</name>
        <dbReference type="ChEBI" id="CHEBI:29985"/>
    </ligand>
</feature>
<feature type="binding site" evidence="23 32 34">
    <location>
        <position position="266"/>
    </location>
    <ligand>
        <name>L-glutamate</name>
        <dbReference type="ChEBI" id="CHEBI:29985"/>
    </ligand>
</feature>
<feature type="binding site" evidence="23 32 34">
    <location>
        <position position="283"/>
    </location>
    <ligand>
        <name>L-glutamate</name>
        <dbReference type="ChEBI" id="CHEBI:29985"/>
    </ligand>
</feature>
<feature type="binding site" evidence="14 32">
    <location>
        <position position="346"/>
    </location>
    <ligand>
        <name>Mg(2+)</name>
        <dbReference type="ChEBI" id="CHEBI:18420"/>
        <label>1</label>
    </ligand>
</feature>
<feature type="binding site" evidence="14 32">
    <location>
        <position position="359"/>
    </location>
    <ligand>
        <name>Mg(2+)</name>
        <dbReference type="ChEBI" id="CHEBI:18420"/>
        <label>1</label>
    </ligand>
</feature>
<feature type="binding site" evidence="14 32">
    <location>
        <position position="359"/>
    </location>
    <ligand>
        <name>Mg(2+)</name>
        <dbReference type="ChEBI" id="CHEBI:18420"/>
        <label>2</label>
    </ligand>
</feature>
<feature type="binding site" evidence="14 32">
    <location>
        <position position="361"/>
    </location>
    <ligand>
        <name>Mg(2+)</name>
        <dbReference type="ChEBI" id="CHEBI:18420"/>
        <label>2</label>
    </ligand>
</feature>
<feature type="binding site" evidence="23">
    <location>
        <position position="362"/>
    </location>
    <ligand>
        <name>a protein</name>
        <dbReference type="ChEBI" id="CHEBI:16541"/>
    </ligand>
    <ligandPart>
        <name>L-glutamate residue</name>
        <dbReference type="ChEBI" id="CHEBI:29973"/>
        <note>L-glutamate acceptor residue in protein target</note>
    </ligandPart>
</feature>
<feature type="binding site" evidence="23 32 34">
    <location>
        <position position="377"/>
    </location>
    <ligand>
        <name>L-glutamate</name>
        <dbReference type="ChEBI" id="CHEBI:29985"/>
    </ligand>
</feature>
<feature type="site" description="Essential for specifying alpha-elongation versus initiation step of the polyglutamylase activity" evidence="14">
    <location>
        <position position="180"/>
    </location>
</feature>
<feature type="site" description="Important for specifying alpha-elongation versus initiation step of the polyglutamylase activity" evidence="14">
    <location>
        <position position="362"/>
    </location>
</feature>
<feature type="splice variant" id="VSP_052729" description="In isoform 2." evidence="15 16">
    <location>
        <begin position="1"/>
        <end position="104"/>
    </location>
</feature>
<feature type="mutagenesis site" description="Loss of alpha-tubulin alpha-elongation step of polyglutamylase activity." evidence="14">
    <original>K</original>
    <variation>A</variation>
    <location>
        <position position="125"/>
    </location>
</feature>
<feature type="mutagenesis site" description="Loss of alpha-tubulin alpha-elongation step of polyglutamylase activity." evidence="14">
    <original>K</original>
    <variation>A</variation>
    <location>
        <position position="174"/>
    </location>
</feature>
<feature type="mutagenesis site" description="Strong increase in alpha-tubulin initiation step of polyglutamylase activity; when associated with R-180 and I-362. Strong increase in alpha-tubulin initiation step of polyglutamylase activity; when associated with R-180, I-182, I-362 and H-367." evidence="14">
    <original>C</original>
    <variation>A</variation>
    <location>
        <position position="179"/>
    </location>
</feature>
<feature type="mutagenesis site" description="Decreased alpha-tubulin alpha-elongation step of polyglutamylase activity." evidence="14">
    <original>C</original>
    <variation>V</variation>
    <location>
        <position position="179"/>
    </location>
</feature>
<feature type="mutagenesis site" description="Decreased alpha-tubulin alpha-elongation step of polyglutamylase activity." evidence="14">
    <original>Q</original>
    <variation>A</variation>
    <location>
        <position position="180"/>
    </location>
</feature>
<feature type="mutagenesis site" description="Increased alpha-tubulin initiation step of polyglutamylase activity. Increased alpha-tubulin initiation step of polyglutamylase activity; when associated with I-362. Strong increase in alpha-tubulin initiation step of polyglutamylase activity; when associated with A-179 and I-362. Strong increase in alpha-tubulin initiation step of polyglutamylase activity; when associated with A-179, I-182, I-362 and H-367." evidence="14">
    <original>Q</original>
    <variation>R</variation>
    <location>
        <position position="180"/>
    </location>
</feature>
<feature type="mutagenesis site" description="Strong increase in alpha-tubulin initiation step of polyglutamylase activity; when associated with A-179, R-180, I-362 and H-367." evidence="14">
    <original>R</original>
    <variation>I</variation>
    <location>
        <position position="182"/>
    </location>
</feature>
<feature type="mutagenesis site" description="Loss of alpha-tubulin alpha-elongation polyglutamylase activity." evidence="14">
    <original>R</original>
    <variation>A</variation>
    <location>
        <position position="219"/>
    </location>
</feature>
<feature type="mutagenesis site" description="Loss of alpha-tubulin alpha-elongation step of polyglutamylase activity." evidence="14">
    <original>R</original>
    <variation>A</variation>
    <location>
        <position position="241"/>
    </location>
</feature>
<feature type="mutagenesis site" description="Loss of alpha-tubulin alpha-elongation step of polyglutamylase activity." evidence="14">
    <original>N</original>
    <variation>A</variation>
    <location>
        <position position="264"/>
    </location>
</feature>
<feature type="mutagenesis site" description="Loss of alpha-tubulin alpha-elongation step of polyglutamylase activity." evidence="14">
    <original>K</original>
    <variation>A</variation>
    <location>
        <position position="283"/>
    </location>
</feature>
<feature type="mutagenesis site" description="Loss of alpha-tubulin alpha-elongation step of polyglutamylase activity." evidence="14">
    <original>D</original>
    <variation>A</variation>
    <location>
        <position position="346"/>
    </location>
</feature>
<feature type="mutagenesis site" description="Loss of alpha-tubulin alpha-elongation step of polyglutamylase activity." evidence="14">
    <original>E</original>
    <variation>Q</variation>
    <location>
        <position position="359"/>
    </location>
</feature>
<feature type="mutagenesis site" description="Decreased alpha-tubulin alpha-elongation step of polyglutamylase activity." evidence="14">
    <original>H</original>
    <variation>A</variation>
    <location>
        <position position="362"/>
    </location>
</feature>
<feature type="mutagenesis site" description="Small increase in alpha-tubulin initiation step of polyglutamylase activity. Increased alpha-tubulin initiation step of polyglutamylase activity; when associated with R-180. Strong increase in alpha-tubulin initiation step of polyglutamylase activity; when associated with A-179 and R-180. Strong increase in alpha-tubulin initiation step of polyglutamylase activity; when associated with A-179, R-180, I-362 and H-367." evidence="14">
    <original>H</original>
    <variation>I</variation>
    <location>
        <position position="362"/>
    </location>
</feature>
<feature type="mutagenesis site" description="Strong increase in alpha-tubulin initiation step of polyglutamylase activity; when associated with A-179, R-180, I-182 and I-262." evidence="14">
    <original>S</original>
    <variation>H</variation>
    <location>
        <position position="367"/>
    </location>
</feature>
<feature type="mutagenesis site" description="Loss of alpha-tubulin alpha-elongation step of polyglutamylase activity." evidence="14">
    <original>K</original>
    <variation>A</variation>
    <location>
        <position position="377"/>
    </location>
</feature>
<feature type="sequence conflict" description="In Ref. 2; BAC36577." evidence="18" ref="2">
    <original>P</original>
    <variation>A</variation>
    <location>
        <position position="195"/>
    </location>
</feature>
<feature type="strand" evidence="36">
    <location>
        <begin position="61"/>
        <end position="63"/>
    </location>
</feature>
<feature type="helix" evidence="36">
    <location>
        <begin position="70"/>
        <end position="79"/>
    </location>
</feature>
<feature type="strand" evidence="36">
    <location>
        <begin position="91"/>
        <end position="93"/>
    </location>
</feature>
<feature type="helix" evidence="36">
    <location>
        <begin position="101"/>
        <end position="105"/>
    </location>
</feature>
<feature type="strand" evidence="36">
    <location>
        <begin position="112"/>
        <end position="114"/>
    </location>
</feature>
<feature type="turn" evidence="36">
    <location>
        <begin position="117"/>
        <end position="119"/>
    </location>
</feature>
<feature type="helix" evidence="36">
    <location>
        <begin position="120"/>
        <end position="123"/>
    </location>
</feature>
<feature type="helix" evidence="36">
    <location>
        <begin position="125"/>
        <end position="138"/>
    </location>
</feature>
<feature type="turn" evidence="36">
    <location>
        <begin position="140"/>
        <end position="142"/>
    </location>
</feature>
<feature type="strand" evidence="36">
    <location>
        <begin position="149"/>
        <end position="152"/>
    </location>
</feature>
<feature type="turn" evidence="36">
    <location>
        <begin position="153"/>
        <end position="155"/>
    </location>
</feature>
<feature type="helix" evidence="36">
    <location>
        <begin position="156"/>
        <end position="165"/>
    </location>
</feature>
<feature type="strand" evidence="36">
    <location>
        <begin position="171"/>
        <end position="174"/>
    </location>
</feature>
<feature type="turn" evidence="36">
    <location>
        <begin position="180"/>
        <end position="183"/>
    </location>
</feature>
<feature type="strand" evidence="36">
    <location>
        <begin position="185"/>
        <end position="188"/>
    </location>
</feature>
<feature type="helix" evidence="36">
    <location>
        <begin position="190"/>
        <end position="192"/>
    </location>
</feature>
<feature type="strand" evidence="36">
    <location>
        <begin position="199"/>
        <end position="203"/>
    </location>
</feature>
<feature type="strand" evidence="35">
    <location>
        <begin position="206"/>
        <end position="208"/>
    </location>
</feature>
<feature type="strand" evidence="36">
    <location>
        <begin position="216"/>
        <end position="226"/>
    </location>
</feature>
<feature type="turn" evidence="36">
    <location>
        <begin position="227"/>
        <end position="230"/>
    </location>
</feature>
<feature type="strand" evidence="36">
    <location>
        <begin position="231"/>
        <end position="242"/>
    </location>
</feature>
<feature type="turn" evidence="36">
    <location>
        <begin position="252"/>
        <end position="256"/>
    </location>
</feature>
<feature type="helix" evidence="36">
    <location>
        <begin position="258"/>
        <end position="261"/>
    </location>
</feature>
<feature type="helix" evidence="36">
    <location>
        <begin position="265"/>
        <end position="268"/>
    </location>
</feature>
<feature type="turn" evidence="36">
    <location>
        <begin position="278"/>
        <end position="280"/>
    </location>
</feature>
<feature type="strand" evidence="36">
    <location>
        <begin position="281"/>
        <end position="285"/>
    </location>
</feature>
<feature type="helix" evidence="36">
    <location>
        <begin position="286"/>
        <end position="295"/>
    </location>
</feature>
<feature type="helix" evidence="36">
    <location>
        <begin position="300"/>
        <end position="329"/>
    </location>
</feature>
<feature type="strand" evidence="36">
    <location>
        <begin position="341"/>
        <end position="350"/>
    </location>
</feature>
<feature type="strand" evidence="36">
    <location>
        <begin position="355"/>
        <end position="363"/>
    </location>
</feature>
<feature type="helix" evidence="36">
    <location>
        <begin position="371"/>
        <end position="387"/>
    </location>
</feature>
<feature type="helix" evidence="36">
    <location>
        <begin position="390"/>
        <end position="393"/>
    </location>
</feature>
<feature type="helix" evidence="36">
    <location>
        <begin position="395"/>
        <end position="411"/>
    </location>
</feature>
<feature type="helix" evidence="36">
    <location>
        <begin position="415"/>
        <end position="439"/>
    </location>
</feature>
<feature type="strand" evidence="36">
    <location>
        <begin position="444"/>
        <end position="449"/>
    </location>
</feature>
<feature type="helix" evidence="36">
    <location>
        <begin position="453"/>
        <end position="459"/>
    </location>
</feature>
<reference key="1">
    <citation type="journal article" date="2007" name="Mol. Cell">
        <title>A targeted multienzyme mechanism for selective microtubule polyglutamylation.</title>
        <authorList>
            <person name="van Dijk J."/>
            <person name="Rogowski K."/>
            <person name="Miro J."/>
            <person name="Lacroix B."/>
            <person name="Edde B."/>
            <person name="Janke C."/>
        </authorList>
    </citation>
    <scope>NUCLEOTIDE SEQUENCE [MRNA] (ISOFORM 1)</scope>
    <scope>FUNCTION</scope>
    <scope>SUBCELLULAR LOCATION</scope>
    <scope>TISSUE SPECIFICITY</scope>
    <scope>CATALYTIC ACTIVITY</scope>
    <source>
        <strain evidence="27">C57BL/6J</strain>
        <tissue evidence="27">Testis</tissue>
    </source>
</reference>
<reference key="2">
    <citation type="journal article" date="2005" name="Science">
        <title>The transcriptional landscape of the mammalian genome.</title>
        <authorList>
            <person name="Carninci P."/>
            <person name="Kasukawa T."/>
            <person name="Katayama S."/>
            <person name="Gough J."/>
            <person name="Frith M.C."/>
            <person name="Maeda N."/>
            <person name="Oyama R."/>
            <person name="Ravasi T."/>
            <person name="Lenhard B."/>
            <person name="Wells C."/>
            <person name="Kodzius R."/>
            <person name="Shimokawa K."/>
            <person name="Bajic V.B."/>
            <person name="Brenner S.E."/>
            <person name="Batalov S."/>
            <person name="Forrest A.R."/>
            <person name="Zavolan M."/>
            <person name="Davis M.J."/>
            <person name="Wilming L.G."/>
            <person name="Aidinis V."/>
            <person name="Allen J.E."/>
            <person name="Ambesi-Impiombato A."/>
            <person name="Apweiler R."/>
            <person name="Aturaliya R.N."/>
            <person name="Bailey T.L."/>
            <person name="Bansal M."/>
            <person name="Baxter L."/>
            <person name="Beisel K.W."/>
            <person name="Bersano T."/>
            <person name="Bono H."/>
            <person name="Chalk A.M."/>
            <person name="Chiu K.P."/>
            <person name="Choudhary V."/>
            <person name="Christoffels A."/>
            <person name="Clutterbuck D.R."/>
            <person name="Crowe M.L."/>
            <person name="Dalla E."/>
            <person name="Dalrymple B.P."/>
            <person name="de Bono B."/>
            <person name="Della Gatta G."/>
            <person name="di Bernardo D."/>
            <person name="Down T."/>
            <person name="Engstrom P."/>
            <person name="Fagiolini M."/>
            <person name="Faulkner G."/>
            <person name="Fletcher C.F."/>
            <person name="Fukushima T."/>
            <person name="Furuno M."/>
            <person name="Futaki S."/>
            <person name="Gariboldi M."/>
            <person name="Georgii-Hemming P."/>
            <person name="Gingeras T.R."/>
            <person name="Gojobori T."/>
            <person name="Green R.E."/>
            <person name="Gustincich S."/>
            <person name="Harbers M."/>
            <person name="Hayashi Y."/>
            <person name="Hensch T.K."/>
            <person name="Hirokawa N."/>
            <person name="Hill D."/>
            <person name="Huminiecki L."/>
            <person name="Iacono M."/>
            <person name="Ikeo K."/>
            <person name="Iwama A."/>
            <person name="Ishikawa T."/>
            <person name="Jakt M."/>
            <person name="Kanapin A."/>
            <person name="Katoh M."/>
            <person name="Kawasawa Y."/>
            <person name="Kelso J."/>
            <person name="Kitamura H."/>
            <person name="Kitano H."/>
            <person name="Kollias G."/>
            <person name="Krishnan S.P."/>
            <person name="Kruger A."/>
            <person name="Kummerfeld S.K."/>
            <person name="Kurochkin I.V."/>
            <person name="Lareau L.F."/>
            <person name="Lazarevic D."/>
            <person name="Lipovich L."/>
            <person name="Liu J."/>
            <person name="Liuni S."/>
            <person name="McWilliam S."/>
            <person name="Madan Babu M."/>
            <person name="Madera M."/>
            <person name="Marchionni L."/>
            <person name="Matsuda H."/>
            <person name="Matsuzawa S."/>
            <person name="Miki H."/>
            <person name="Mignone F."/>
            <person name="Miyake S."/>
            <person name="Morris K."/>
            <person name="Mottagui-Tabar S."/>
            <person name="Mulder N."/>
            <person name="Nakano N."/>
            <person name="Nakauchi H."/>
            <person name="Ng P."/>
            <person name="Nilsson R."/>
            <person name="Nishiguchi S."/>
            <person name="Nishikawa S."/>
            <person name="Nori F."/>
            <person name="Ohara O."/>
            <person name="Okazaki Y."/>
            <person name="Orlando V."/>
            <person name="Pang K.C."/>
            <person name="Pavan W.J."/>
            <person name="Pavesi G."/>
            <person name="Pesole G."/>
            <person name="Petrovsky N."/>
            <person name="Piazza S."/>
            <person name="Reed J."/>
            <person name="Reid J.F."/>
            <person name="Ring B.Z."/>
            <person name="Ringwald M."/>
            <person name="Rost B."/>
            <person name="Ruan Y."/>
            <person name="Salzberg S.L."/>
            <person name="Sandelin A."/>
            <person name="Schneider C."/>
            <person name="Schoenbach C."/>
            <person name="Sekiguchi K."/>
            <person name="Semple C.A."/>
            <person name="Seno S."/>
            <person name="Sessa L."/>
            <person name="Sheng Y."/>
            <person name="Shibata Y."/>
            <person name="Shimada H."/>
            <person name="Shimada K."/>
            <person name="Silva D."/>
            <person name="Sinclair B."/>
            <person name="Sperling S."/>
            <person name="Stupka E."/>
            <person name="Sugiura K."/>
            <person name="Sultana R."/>
            <person name="Takenaka Y."/>
            <person name="Taki K."/>
            <person name="Tammoja K."/>
            <person name="Tan S.L."/>
            <person name="Tang S."/>
            <person name="Taylor M.S."/>
            <person name="Tegner J."/>
            <person name="Teichmann S.A."/>
            <person name="Ueda H.R."/>
            <person name="van Nimwegen E."/>
            <person name="Verardo R."/>
            <person name="Wei C.L."/>
            <person name="Yagi K."/>
            <person name="Yamanishi H."/>
            <person name="Zabarovsky E."/>
            <person name="Zhu S."/>
            <person name="Zimmer A."/>
            <person name="Hide W."/>
            <person name="Bult C."/>
            <person name="Grimmond S.M."/>
            <person name="Teasdale R.D."/>
            <person name="Liu E.T."/>
            <person name="Brusic V."/>
            <person name="Quackenbush J."/>
            <person name="Wahlestedt C."/>
            <person name="Mattick J.S."/>
            <person name="Hume D.A."/>
            <person name="Kai C."/>
            <person name="Sasaki D."/>
            <person name="Tomaru Y."/>
            <person name="Fukuda S."/>
            <person name="Kanamori-Katayama M."/>
            <person name="Suzuki M."/>
            <person name="Aoki J."/>
            <person name="Arakawa T."/>
            <person name="Iida J."/>
            <person name="Imamura K."/>
            <person name="Itoh M."/>
            <person name="Kato T."/>
            <person name="Kawaji H."/>
            <person name="Kawagashira N."/>
            <person name="Kawashima T."/>
            <person name="Kojima M."/>
            <person name="Kondo S."/>
            <person name="Konno H."/>
            <person name="Nakano K."/>
            <person name="Ninomiya N."/>
            <person name="Nishio T."/>
            <person name="Okada M."/>
            <person name="Plessy C."/>
            <person name="Shibata K."/>
            <person name="Shiraki T."/>
            <person name="Suzuki S."/>
            <person name="Tagami M."/>
            <person name="Waki K."/>
            <person name="Watahiki A."/>
            <person name="Okamura-Oho Y."/>
            <person name="Suzuki H."/>
            <person name="Kawai J."/>
            <person name="Hayashizaki Y."/>
        </authorList>
    </citation>
    <scope>NUCLEOTIDE SEQUENCE [LARGE SCALE MRNA] (ISOFORM 2)</scope>
    <source>
        <strain evidence="25">C57BL/6J</strain>
        <tissue evidence="26">Blastocyst</tissue>
        <tissue evidence="25">Testis</tissue>
    </source>
</reference>
<reference key="3">
    <citation type="journal article" date="2009" name="PLoS Biol.">
        <title>Lineage-specific biology revealed by a finished genome assembly of the mouse.</title>
        <authorList>
            <person name="Church D.M."/>
            <person name="Goodstadt L."/>
            <person name="Hillier L.W."/>
            <person name="Zody M.C."/>
            <person name="Goldstein S."/>
            <person name="She X."/>
            <person name="Bult C.J."/>
            <person name="Agarwala R."/>
            <person name="Cherry J.L."/>
            <person name="DiCuccio M."/>
            <person name="Hlavina W."/>
            <person name="Kapustin Y."/>
            <person name="Meric P."/>
            <person name="Maglott D."/>
            <person name="Birtle Z."/>
            <person name="Marques A.C."/>
            <person name="Graves T."/>
            <person name="Zhou S."/>
            <person name="Teague B."/>
            <person name="Potamousis K."/>
            <person name="Churas C."/>
            <person name="Place M."/>
            <person name="Herschleb J."/>
            <person name="Runnheim R."/>
            <person name="Forrest D."/>
            <person name="Amos-Landgraf J."/>
            <person name="Schwartz D.C."/>
            <person name="Cheng Z."/>
            <person name="Lindblad-Toh K."/>
            <person name="Eichler E.E."/>
            <person name="Ponting C.P."/>
        </authorList>
    </citation>
    <scope>NUCLEOTIDE SEQUENCE [LARGE SCALE GENOMIC DNA]</scope>
    <source>
        <strain>C57BL/6J</strain>
    </source>
</reference>
<reference key="4">
    <citation type="journal article" date="2004" name="Genome Res.">
        <title>The status, quality, and expansion of the NIH full-length cDNA project: the Mammalian Gene Collection (MGC).</title>
        <authorList>
            <consortium name="The MGC Project Team"/>
        </authorList>
    </citation>
    <scope>NUCLEOTIDE SEQUENCE [LARGE SCALE MRNA] (ISOFORM 2)</scope>
    <source>
        <tissue evidence="24">Brain</tissue>
    </source>
</reference>
<reference key="5">
    <citation type="journal article" date="2010" name="Cell">
        <title>A family of protein-deglutamylating enzymes associated with neurodegeneration.</title>
        <authorList>
            <person name="Rogowski K."/>
            <person name="van Dijk J."/>
            <person name="Magiera M.M."/>
            <person name="Bosc C."/>
            <person name="Deloulme J.C."/>
            <person name="Bosson A."/>
            <person name="Peris L."/>
            <person name="Gold N.D."/>
            <person name="Lacroix B."/>
            <person name="Grau M.B."/>
            <person name="Bec N."/>
            <person name="Larroque C."/>
            <person name="Desagher S."/>
            <person name="Holzer M."/>
            <person name="Andrieux A."/>
            <person name="Moutin M.J."/>
            <person name="Janke C."/>
        </authorList>
    </citation>
    <scope>FUNCTION</scope>
    <scope>CATALYTIC ACTIVITY</scope>
</reference>
<reference key="6">
    <citation type="journal article" date="2010" name="J. Cell Biol.">
        <title>Tubulin polyglutamylation stimulates spastin-mediated microtubule severing.</title>
        <authorList>
            <person name="Lacroix B."/>
            <person name="van Dijk J."/>
            <person name="Gold N.D."/>
            <person name="Guizetti J."/>
            <person name="Aldrian-Herrada G."/>
            <person name="Rogowski K."/>
            <person name="Gerlich D.W."/>
            <person name="Janke C."/>
        </authorList>
    </citation>
    <scope>FUNCTION</scope>
    <scope>CATALYTIC ACTIVITY</scope>
    <scope>SUBCELLULAR LOCATION</scope>
</reference>
<reference key="7">
    <citation type="journal article" date="2012" name="Nat. Genet.">
        <title>CEP41 is mutated in Joubert syndrome and is required for tubulin glutamylation at the cilium.</title>
        <authorList>
            <person name="Lee J.E."/>
            <person name="Silhavy J.L."/>
            <person name="Zaki M.S."/>
            <person name="Schroth J."/>
            <person name="Bielas S.L."/>
            <person name="Marsh S.E."/>
            <person name="Olvera J."/>
            <person name="Brancati F."/>
            <person name="Iannicelli M."/>
            <person name="Ikegami K."/>
            <person name="Schlossman A.M."/>
            <person name="Merriman B."/>
            <person name="Attie-Bitach T."/>
            <person name="Logan C.V."/>
            <person name="Glass I.A."/>
            <person name="Cluckey A."/>
            <person name="Louie C.M."/>
            <person name="Lee J.H."/>
            <person name="Raynes H.R."/>
            <person name="Rapin I."/>
            <person name="Castroviejo I.P."/>
            <person name="Setou M."/>
            <person name="Barbot C."/>
            <person name="Boltshauser E."/>
            <person name="Nelson S.F."/>
            <person name="Hildebrandt F."/>
            <person name="Johnson C.A."/>
            <person name="Doherty D.A."/>
            <person name="Valente E.M."/>
            <person name="Gleeson J.G."/>
        </authorList>
    </citation>
    <scope>FUNCTION</scope>
    <scope>SUBCELLULAR LOCATION</scope>
</reference>
<reference key="8">
    <citation type="journal article" date="2013" name="J. Cell Biol.">
        <title>Tubulin glycylases and glutamylases have distinct functions in stabilization and motility of ependymal cilia.</title>
        <authorList>
            <person name="Bosch Grau M."/>
            <person name="Gonzalez Curto G."/>
            <person name="Rocha C."/>
            <person name="Magiera M.M."/>
            <person name="Marques Sousa P."/>
            <person name="Giordano T."/>
            <person name="Spassky N."/>
            <person name="Janke C."/>
        </authorList>
    </citation>
    <scope>FUNCTION</scope>
    <scope>TISSUE SPECIFICITY</scope>
</reference>
<reference key="9">
    <citation type="journal article" date="2016" name="Nat. Immunol.">
        <title>Glutamylation of the DNA sensor cGAS regulates its binding and synthase activity in antiviral immunity.</title>
        <authorList>
            <person name="Xia P."/>
            <person name="Ye B."/>
            <person name="Wang S."/>
            <person name="Zhu X."/>
            <person name="Du Y."/>
            <person name="Xiong Z."/>
            <person name="Tian Y."/>
            <person name="Fan Z."/>
        </authorList>
    </citation>
    <scope>FUNCTION</scope>
    <scope>CATALYTIC ACTIVITY</scope>
    <scope>SUBCELLULAR LOCATION</scope>
</reference>
<reference evidence="28 29 30 31 32 33 34" key="10">
    <citation type="journal article" date="2020" name="Nat. Struct. Mol. Biol.">
        <title>Structural basis for polyglutamate chain initiation and elongation by TTLL family enzymes.</title>
        <authorList>
            <person name="Mahalingan K.K."/>
            <person name="Keith Keenan E."/>
            <person name="Strickland M."/>
            <person name="Li Y."/>
            <person name="Liu Y."/>
            <person name="Ball H.L."/>
            <person name="Tanner M.E."/>
            <person name="Tjandra N."/>
            <person name="Roll-Mecak A."/>
        </authorList>
    </citation>
    <scope>X-RAY CRYSTALLOGRAPHY (1.98 ANGSTROMS) OF 51-503 OF WILD-TYPE AND MUTANT ALA-189/ARG-180/ILE-362 IN COMPLEXES WITH ATP; MAGNESIUM AND TETRAHEDRAL INTERMEDIATES ANALOGS</scope>
    <scope>FUNCTION</scope>
    <scope>CATALYTIC ACTIVITY</scope>
    <scope>BIOPHYSICOCHEMICAL PROPERTIES</scope>
    <scope>COFACTOR</scope>
    <scope>MUTAGENESIS OF LYS-125; LYS-174; CYS-179; GLN-180; ARG-182; ARG-219; ARG-241; ASN-264; LYS-283; ASP-346; GLU-359; HIS-362; SER-367 AND LYS-377</scope>
</reference>
<organism>
    <name type="scientific">Mus musculus</name>
    <name type="common">Mouse</name>
    <dbReference type="NCBI Taxonomy" id="10090"/>
    <lineage>
        <taxon>Eukaryota</taxon>
        <taxon>Metazoa</taxon>
        <taxon>Chordata</taxon>
        <taxon>Craniata</taxon>
        <taxon>Vertebrata</taxon>
        <taxon>Euteleostomi</taxon>
        <taxon>Mammalia</taxon>
        <taxon>Eutheria</taxon>
        <taxon>Euarchontoglires</taxon>
        <taxon>Glires</taxon>
        <taxon>Rodentia</taxon>
        <taxon>Myomorpha</taxon>
        <taxon>Muroidea</taxon>
        <taxon>Muridae</taxon>
        <taxon>Murinae</taxon>
        <taxon>Mus</taxon>
        <taxon>Mus</taxon>
    </lineage>
</organism>
<proteinExistence type="evidence at protein level"/>
<protein>
    <recommendedName>
        <fullName evidence="17">Tubulin polyglutamylase TTLL6</fullName>
        <ecNumber evidence="8 9 10 13 14">6.3.2.-</ecNumber>
    </recommendedName>
    <alternativeName>
        <fullName evidence="19">Protein polyglutamylase TTLL6</fullName>
    </alternativeName>
    <alternativeName>
        <fullName>Tubulin--tyrosine ligase-like protein 6</fullName>
    </alternativeName>
</protein>
<sequence>MLQCLTSESEEGAEEREESSTEDLEELKEFVTLAFVRENTQKRLQNAQQHGKKKRKKKRLVINLSNCRYDSVRRAAQQYGLREAGDNDDWTLYWTDYSVSLERVMEMKSYQKINHFPGMSEICRKDLLARNMSRMLKLFPKDFHFFPRTWCLPADWGDLQTYSRTRKNKTYICKPDSGCQGRGIFITRSVKEIKPGEDMICQLYISKPFIIDGFKFDLRVYVLVTSCDPLRVFVYNEGLARFATTSYSHPNLDNLDEICMHLTNYSINKHSSNFVQDAFSGSKRKLSTFNSYMKTHGYDVEQIWRGIEDVIIKTLISAHPVIKHNYHTCFPSHTLNSACFEILGFDILLDRKLKPWLLEVNHSPSFSTDSKLDKEVKDSLLYDALVLINLGNCDKKKVLEEERQRGRFLQQCPNREIRLEEVKGFQAMRLQKTEEYEKKNCGGFRLIYPGLNLEKYDKFFQDNSSLFQNTVASRARELYARQLIQELRQKQEKKVFLKKARKEETQGESAGEQARDKVVRLQRQRQQPKCKTVATCPPKQSLHPVTLVSCTSGLLLNIRGLKKGEISESLEQKDTKEAMLIPCKPVSARNYSSVPDLRSANPSCFEPEFHVPNAKVKEVKSAFMVNIESTAQPITSVESSRDATAPISTSLESLASMSLSTSPECSSPESVHMVSYNHKQQKASFHKPMQEKKSKPLMFSKSRHLDLNCTSMKNDINRQYLMSEILQKVQMKKKRPLFPAPKSQYPTLSKERCPHSRSSSRKKEMNSPSVFVLQASHSRAESLNDLLVVATQARLDPRPSRSHSGTTTRDSSTQDPKHTATA</sequence>
<name>TTLL6_MOUSE</name>
<comment type="function">
    <text evidence="8 9 10 11 12 13 14">Polyglutamylase which modifies both tubulin and non-tubulin proteins, generating alpha-linked polyglutamate side chains on the gamma-carboxyl group of specific glutamate residues of target proteins (PubMed:17499049, PubMed:20530212, PubMed:21074048, PubMed:26829768, PubMed:32747782). Preferentially mediates ATP-dependent long polyglutamate chain elongation over the initiation step of the polyglutamylation reaction (PubMed:17499049, PubMed:20530212, PubMed:21074048, PubMed:26829768, PubMed:32747782). Preferentially modifies the alpha-tubulin tail over a beta-tail (PubMed:17499049, PubMed:20530212, PubMed:21074048, PubMed:32747782). Promotes tubulin polyglutamylation which stimulates spastin/SPAST-mediated microtubule severing, thereby regulating microtubule functions (PubMed:20530212). Mediates microtubule polyglutamylation in primary cilia axoneme which is important for ciliary structural formation and motility (PubMed:22246503). Mediates microtubule polyglutamylation in motile cilia, necessary for the regulation of ciliary coordinated beating (PubMed:23897886). Polyglutamylates non-tubulin protein nucleotidyltransferase CGAS, leading to CGAS DNA-binding inhibition, thereby preventing antiviral defense response (PubMed:26829768).</text>
</comment>
<comment type="catalytic activity">
    <reaction evidence="8 14">
        <text>L-glutamyl-[protein] + L-glutamate + ATP = gamma-L-glutamyl-L-glutamyl-[protein] + ADP + phosphate + H(+)</text>
        <dbReference type="Rhea" id="RHEA:60144"/>
        <dbReference type="Rhea" id="RHEA-COMP:10208"/>
        <dbReference type="Rhea" id="RHEA-COMP:15517"/>
        <dbReference type="ChEBI" id="CHEBI:15378"/>
        <dbReference type="ChEBI" id="CHEBI:29973"/>
        <dbReference type="ChEBI" id="CHEBI:29985"/>
        <dbReference type="ChEBI" id="CHEBI:30616"/>
        <dbReference type="ChEBI" id="CHEBI:43474"/>
        <dbReference type="ChEBI" id="CHEBI:143622"/>
        <dbReference type="ChEBI" id="CHEBI:456216"/>
    </reaction>
    <physiologicalReaction direction="left-to-right" evidence="19 23">
        <dbReference type="Rhea" id="RHEA:60145"/>
    </physiologicalReaction>
</comment>
<comment type="catalytic activity">
    <reaction evidence="8 9 10 13 14">
        <text>(L-glutamyl)(n)-gamma-L-glutamyl-L-glutamyl-[protein] + L-glutamate + ATP = (L-glutamyl)(n+1)-gamma-L-glutamyl-L-glutamyl-[protein] + ADP + phosphate + H(+)</text>
        <dbReference type="Rhea" id="RHEA:60148"/>
        <dbReference type="Rhea" id="RHEA-COMP:15519"/>
        <dbReference type="Rhea" id="RHEA-COMP:15675"/>
        <dbReference type="ChEBI" id="CHEBI:15378"/>
        <dbReference type="ChEBI" id="CHEBI:29985"/>
        <dbReference type="ChEBI" id="CHEBI:30616"/>
        <dbReference type="ChEBI" id="CHEBI:43474"/>
        <dbReference type="ChEBI" id="CHEBI:143623"/>
        <dbReference type="ChEBI" id="CHEBI:456216"/>
    </reaction>
    <physiologicalReaction direction="left-to-right" evidence="19 20 21 22 23">
        <dbReference type="Rhea" id="RHEA:60149"/>
    </physiologicalReaction>
</comment>
<comment type="cofactor">
    <cofactor evidence="14">
        <name>Mg(2+)</name>
        <dbReference type="ChEBI" id="CHEBI:18420"/>
    </cofactor>
</comment>
<comment type="biophysicochemical properties">
    <kinetics>
        <KM evidence="14">2.22 uM for glutamylated tubulin</KM>
        <KM evidence="14">1.92 uM for non-glutamylated tubulin</KM>
        <text evidence="14">kcat is 0.73 min(-1) with glutamylated tubulin as substrate (PubMed:32747782). kcat is 0.04 min(-1) with non-glutamylated tubulin as substrate (PubMed:32747782).</text>
    </kinetics>
</comment>
<comment type="subunit">
    <text evidence="2">Found in a complex with CEP41.</text>
</comment>
<comment type="subcellular location">
    <subcellularLocation>
        <location evidence="13">Cytoplasm</location>
    </subcellularLocation>
    <subcellularLocation>
        <location evidence="20">Cytoplasm</location>
        <location evidence="20">Cytoskeleton</location>
    </subcellularLocation>
    <subcellularLocation>
        <location evidence="8">Cytoplasm</location>
        <location evidence="8">Cytoskeleton</location>
        <location evidence="8">Cilium axoneme</location>
    </subcellularLocation>
    <subcellularLocation>
        <location evidence="8">Cytoplasm</location>
        <location evidence="8">Cytoskeleton</location>
        <location evidence="8">Cilium basal body</location>
    </subcellularLocation>
    <text evidence="2">CEP41 is required for its transport between the basal body and the cilium axoneme.</text>
</comment>
<comment type="alternative products">
    <event type="alternative splicing"/>
    <isoform>
        <id>A4Q9E8-1</id>
        <name evidence="8">1</name>
        <sequence type="displayed"/>
    </isoform>
    <isoform>
        <id>A4Q9E8-2</id>
        <name evidence="6 7">2</name>
        <sequence type="described" ref="VSP_052729"/>
    </isoform>
</comment>
<comment type="tissue specificity">
    <text evidence="8 12">Highly expressed in testis (PubMed:17499049). Expressed in brain, heart, kidney, liver, lung, muscle and trachea (PubMed:17499049). In the brain, specifically expressed in ependymal cilia (PubMed:23897886).</text>
</comment>
<comment type="domain">
    <text evidence="1 2">The flexible c-MTBD (cationic microtubule binding domain) region mediates binding to microtubules. It is positively charged and becomes ordered when bound to microtubules: it interacts with a negatively charged patch on tubulin. The presence of positive charges in the c-MTBD region is essential for proper binding.</text>
</comment>
<comment type="domain">
    <text evidence="14">Gln-180 is the main determinant for regioselectivity, which segregates between initiases and elongases in all tubulin--tyrosine ligase family. A glutamine residue at this position is found in elongases TTLL6, TTLL9, TTLL11, TTLL13, TTLL10 and favors glutamate-chain elongation, whereas an arginine residue is found in initiases TTLL2, TTLL4, TTLL5, TTLL3, TTLL8 and favors initiation.</text>
</comment>
<comment type="similarity">
    <text evidence="3">Belongs to the tubulin--tyrosine ligase family.</text>
</comment>
<comment type="sequence caution" evidence="18">
    <conflict type="frameshift">
        <sequence resource="EMBL-CDS" id="BAC36577"/>
    </conflict>
</comment>
<comment type="sequence caution" evidence="18">
    <conflict type="erroneous gene model prediction">
        <sequence resource="EMBL-CDS" id="CAM18274"/>
    </conflict>
</comment>
<gene>
    <name evidence="27" type="primary">Ttll6</name>
</gene>